<evidence type="ECO:0000255" key="1">
    <source>
        <dbReference type="HAMAP-Rule" id="MF_01395"/>
    </source>
</evidence>
<evidence type="ECO:0000255" key="2">
    <source>
        <dbReference type="PROSITE-ProRule" id="PRU01136"/>
    </source>
</evidence>
<gene>
    <name evidence="1" type="primary">accD</name>
    <name type="ordered locus">BAB1_2109</name>
</gene>
<feature type="chain" id="PRO_0000389701" description="Acetyl-coenzyme A carboxylase carboxyl transferase subunit beta">
    <location>
        <begin position="1"/>
        <end position="301"/>
    </location>
</feature>
<feature type="domain" description="CoA carboxyltransferase N-terminal" evidence="2">
    <location>
        <begin position="25"/>
        <end position="294"/>
    </location>
</feature>
<protein>
    <recommendedName>
        <fullName evidence="1">Acetyl-coenzyme A carboxylase carboxyl transferase subunit beta</fullName>
        <shortName evidence="1">ACCase subunit beta</shortName>
        <shortName evidence="1">Acetyl-CoA carboxylase carboxyltransferase subunit beta</shortName>
        <ecNumber evidence="1">2.1.3.15</ecNumber>
    </recommendedName>
</protein>
<sequence length="301" mass="33304">MNWITNYVRPKINSMLGRREMPENLWIKDPSTGEMVFHKDLESNQFVIPSSGHHMRIKAKDRLRFFFDNGEYTTLEAPKVPLDPLKFRDEKKYIDRLKDYRSRTGMDDAIVNGLGTIEGLPIVATVQDFSFMGGSLGMGAGEAIIQGFEKAIELKRPFVLFASSGGARMQEGILSLMQLPRTTVAVEMLKEAGLPYIVVLTNPTTGGVTASYAMLGDIHIAEPGALIGFAGPRVIEQTIREKLPEGFQSSEYLMEHGMVDMVVSRLELKATIARLLKIMTKQPANSDAPAPQKPDADSKAA</sequence>
<proteinExistence type="inferred from homology"/>
<name>ACCD_BRUA2</name>
<keyword id="KW-0067">ATP-binding</keyword>
<keyword id="KW-0963">Cytoplasm</keyword>
<keyword id="KW-0275">Fatty acid biosynthesis</keyword>
<keyword id="KW-0276">Fatty acid metabolism</keyword>
<keyword id="KW-0444">Lipid biosynthesis</keyword>
<keyword id="KW-0443">Lipid metabolism</keyword>
<keyword id="KW-0547">Nucleotide-binding</keyword>
<keyword id="KW-1185">Reference proteome</keyword>
<keyword id="KW-0808">Transferase</keyword>
<organism>
    <name type="scientific">Brucella abortus (strain 2308)</name>
    <dbReference type="NCBI Taxonomy" id="359391"/>
    <lineage>
        <taxon>Bacteria</taxon>
        <taxon>Pseudomonadati</taxon>
        <taxon>Pseudomonadota</taxon>
        <taxon>Alphaproteobacteria</taxon>
        <taxon>Hyphomicrobiales</taxon>
        <taxon>Brucellaceae</taxon>
        <taxon>Brucella/Ochrobactrum group</taxon>
        <taxon>Brucella</taxon>
    </lineage>
</organism>
<comment type="function">
    <text evidence="1">Component of the acetyl coenzyme A carboxylase (ACC) complex. Biotin carboxylase (BC) catalyzes the carboxylation of biotin on its carrier protein (BCCP) and then the CO(2) group is transferred by the transcarboxylase to acetyl-CoA to form malonyl-CoA.</text>
</comment>
<comment type="catalytic activity">
    <reaction evidence="1">
        <text>N(6)-carboxybiotinyl-L-lysyl-[protein] + acetyl-CoA = N(6)-biotinyl-L-lysyl-[protein] + malonyl-CoA</text>
        <dbReference type="Rhea" id="RHEA:54728"/>
        <dbReference type="Rhea" id="RHEA-COMP:10505"/>
        <dbReference type="Rhea" id="RHEA-COMP:10506"/>
        <dbReference type="ChEBI" id="CHEBI:57288"/>
        <dbReference type="ChEBI" id="CHEBI:57384"/>
        <dbReference type="ChEBI" id="CHEBI:83144"/>
        <dbReference type="ChEBI" id="CHEBI:83145"/>
        <dbReference type="EC" id="2.1.3.15"/>
    </reaction>
</comment>
<comment type="pathway">
    <text evidence="1">Lipid metabolism; malonyl-CoA biosynthesis; malonyl-CoA from acetyl-CoA: step 1/1.</text>
</comment>
<comment type="subunit">
    <text evidence="1">Acetyl-CoA carboxylase is a heterohexamer composed of biotin carboxyl carrier protein (AccB), biotin carboxylase (AccC) and two subunits each of ACCase subunit alpha (AccA) and ACCase subunit beta (AccD).</text>
</comment>
<comment type="subcellular location">
    <subcellularLocation>
        <location evidence="1">Cytoplasm</location>
    </subcellularLocation>
</comment>
<comment type="similarity">
    <text evidence="1">Belongs to the AccD/PCCB family.</text>
</comment>
<dbReference type="EC" id="2.1.3.15" evidence="1"/>
<dbReference type="EMBL" id="AM040264">
    <property type="protein sequence ID" value="CAJ12065.1"/>
    <property type="molecule type" value="Genomic_DNA"/>
</dbReference>
<dbReference type="RefSeq" id="WP_002967038.1">
    <property type="nucleotide sequence ID" value="NZ_KN046823.1"/>
</dbReference>
<dbReference type="SMR" id="Q2YQW8"/>
<dbReference type="STRING" id="359391.BAB1_2109"/>
<dbReference type="GeneID" id="93017586"/>
<dbReference type="KEGG" id="bmf:BAB1_2109"/>
<dbReference type="PATRIC" id="fig|359391.11.peg.1340"/>
<dbReference type="HOGENOM" id="CLU_015486_1_0_5"/>
<dbReference type="PhylomeDB" id="Q2YQW8"/>
<dbReference type="UniPathway" id="UPA00655">
    <property type="reaction ID" value="UER00711"/>
</dbReference>
<dbReference type="Proteomes" id="UP000002719">
    <property type="component" value="Chromosome I"/>
</dbReference>
<dbReference type="GO" id="GO:0009329">
    <property type="term" value="C:acetate CoA-transferase complex"/>
    <property type="evidence" value="ECO:0007669"/>
    <property type="project" value="TreeGrafter"/>
</dbReference>
<dbReference type="GO" id="GO:0003989">
    <property type="term" value="F:acetyl-CoA carboxylase activity"/>
    <property type="evidence" value="ECO:0007669"/>
    <property type="project" value="InterPro"/>
</dbReference>
<dbReference type="GO" id="GO:0005524">
    <property type="term" value="F:ATP binding"/>
    <property type="evidence" value="ECO:0007669"/>
    <property type="project" value="UniProtKB-KW"/>
</dbReference>
<dbReference type="GO" id="GO:0016743">
    <property type="term" value="F:carboxyl- or carbamoyltransferase activity"/>
    <property type="evidence" value="ECO:0007669"/>
    <property type="project" value="UniProtKB-UniRule"/>
</dbReference>
<dbReference type="GO" id="GO:0006633">
    <property type="term" value="P:fatty acid biosynthetic process"/>
    <property type="evidence" value="ECO:0007669"/>
    <property type="project" value="UniProtKB-KW"/>
</dbReference>
<dbReference type="GO" id="GO:2001295">
    <property type="term" value="P:malonyl-CoA biosynthetic process"/>
    <property type="evidence" value="ECO:0007669"/>
    <property type="project" value="UniProtKB-UniRule"/>
</dbReference>
<dbReference type="Gene3D" id="3.90.226.10">
    <property type="entry name" value="2-enoyl-CoA Hydratase, Chain A, domain 1"/>
    <property type="match status" value="1"/>
</dbReference>
<dbReference type="HAMAP" id="MF_01395">
    <property type="entry name" value="AcetylCoA_CT_beta"/>
    <property type="match status" value="1"/>
</dbReference>
<dbReference type="InterPro" id="IPR034733">
    <property type="entry name" value="AcCoA_carboxyl_beta"/>
</dbReference>
<dbReference type="InterPro" id="IPR000438">
    <property type="entry name" value="Acetyl_CoA_COase_Trfase_b_su"/>
</dbReference>
<dbReference type="InterPro" id="IPR029045">
    <property type="entry name" value="ClpP/crotonase-like_dom_sf"/>
</dbReference>
<dbReference type="InterPro" id="IPR011762">
    <property type="entry name" value="COA_CT_N"/>
</dbReference>
<dbReference type="NCBIfam" id="TIGR00515">
    <property type="entry name" value="accD"/>
    <property type="match status" value="1"/>
</dbReference>
<dbReference type="PANTHER" id="PTHR42995">
    <property type="entry name" value="ACETYL-COENZYME A CARBOXYLASE CARBOXYL TRANSFERASE SUBUNIT BETA, CHLOROPLASTIC"/>
    <property type="match status" value="1"/>
</dbReference>
<dbReference type="PANTHER" id="PTHR42995:SF5">
    <property type="entry name" value="ACETYL-COENZYME A CARBOXYLASE CARBOXYL TRANSFERASE SUBUNIT BETA, CHLOROPLASTIC"/>
    <property type="match status" value="1"/>
</dbReference>
<dbReference type="Pfam" id="PF01039">
    <property type="entry name" value="Carboxyl_trans"/>
    <property type="match status" value="1"/>
</dbReference>
<dbReference type="PRINTS" id="PR01070">
    <property type="entry name" value="ACCCTRFRASEB"/>
</dbReference>
<dbReference type="SUPFAM" id="SSF52096">
    <property type="entry name" value="ClpP/crotonase"/>
    <property type="match status" value="1"/>
</dbReference>
<dbReference type="PROSITE" id="PS50980">
    <property type="entry name" value="COA_CT_NTER"/>
    <property type="match status" value="1"/>
</dbReference>
<reference key="1">
    <citation type="journal article" date="2005" name="Infect. Immun.">
        <title>Whole-genome analyses of speciation events in pathogenic Brucellae.</title>
        <authorList>
            <person name="Chain P.S."/>
            <person name="Comerci D.J."/>
            <person name="Tolmasky M.E."/>
            <person name="Larimer F.W."/>
            <person name="Malfatti S.A."/>
            <person name="Vergez L.M."/>
            <person name="Aguero F."/>
            <person name="Land M.L."/>
            <person name="Ugalde R.A."/>
            <person name="Garcia E."/>
        </authorList>
    </citation>
    <scope>NUCLEOTIDE SEQUENCE [LARGE SCALE GENOMIC DNA]</scope>
    <source>
        <strain>2308</strain>
    </source>
</reference>
<accession>Q2YQW8</accession>